<organism>
    <name type="scientific">Borreliella burgdorferi (strain ATCC 35210 / DSM 4680 / CIP 102532 / B31)</name>
    <name type="common">Borrelia burgdorferi</name>
    <dbReference type="NCBI Taxonomy" id="224326"/>
    <lineage>
        <taxon>Bacteria</taxon>
        <taxon>Pseudomonadati</taxon>
        <taxon>Spirochaetota</taxon>
        <taxon>Spirochaetia</taxon>
        <taxon>Spirochaetales</taxon>
        <taxon>Borreliaceae</taxon>
        <taxon>Borreliella</taxon>
    </lineage>
</organism>
<reference key="1">
    <citation type="journal article" date="1997" name="Nature">
        <title>Genomic sequence of a Lyme disease spirochaete, Borrelia burgdorferi.</title>
        <authorList>
            <person name="Fraser C.M."/>
            <person name="Casjens S."/>
            <person name="Huang W.M."/>
            <person name="Sutton G.G."/>
            <person name="Clayton R.A."/>
            <person name="Lathigra R."/>
            <person name="White O."/>
            <person name="Ketchum K.A."/>
            <person name="Dodson R.J."/>
            <person name="Hickey E.K."/>
            <person name="Gwinn M.L."/>
            <person name="Dougherty B.A."/>
            <person name="Tomb J.-F."/>
            <person name="Fleischmann R.D."/>
            <person name="Richardson D.L."/>
            <person name="Peterson J.D."/>
            <person name="Kerlavage A.R."/>
            <person name="Quackenbush J."/>
            <person name="Salzberg S.L."/>
            <person name="Hanson M."/>
            <person name="van Vugt R."/>
            <person name="Palmer N."/>
            <person name="Adams M.D."/>
            <person name="Gocayne J.D."/>
            <person name="Weidman J.F."/>
            <person name="Utterback T.R."/>
            <person name="Watthey L."/>
            <person name="McDonald L.A."/>
            <person name="Artiach P."/>
            <person name="Bowman C."/>
            <person name="Garland S.A."/>
            <person name="Fujii C."/>
            <person name="Cotton M.D."/>
            <person name="Horst K."/>
            <person name="Roberts K.M."/>
            <person name="Hatch B."/>
            <person name="Smith H.O."/>
            <person name="Venter J.C."/>
        </authorList>
    </citation>
    <scope>NUCLEOTIDE SEQUENCE [LARGE SCALE GENOMIC DNA]</scope>
    <source>
        <strain>ATCC 35210 / DSM 4680 / CIP 102532 / B31</strain>
    </source>
</reference>
<dbReference type="EMBL" id="AE000783">
    <property type="status" value="NOT_ANNOTATED_CDS"/>
    <property type="molecule type" value="Genomic_DNA"/>
</dbReference>
<dbReference type="PIR" id="C70204">
    <property type="entry name" value="C70204"/>
</dbReference>
<dbReference type="Proteomes" id="UP000001807">
    <property type="component" value="Chromosome"/>
</dbReference>
<dbReference type="GO" id="GO:0005737">
    <property type="term" value="C:cytoplasm"/>
    <property type="evidence" value="ECO:0007669"/>
    <property type="project" value="UniProtKB-SubCell"/>
</dbReference>
<dbReference type="GO" id="GO:0009380">
    <property type="term" value="C:excinuclease repair complex"/>
    <property type="evidence" value="ECO:0007669"/>
    <property type="project" value="InterPro"/>
</dbReference>
<dbReference type="GO" id="GO:0005524">
    <property type="term" value="F:ATP binding"/>
    <property type="evidence" value="ECO:0007669"/>
    <property type="project" value="UniProtKB-UniRule"/>
</dbReference>
<dbReference type="GO" id="GO:0016887">
    <property type="term" value="F:ATP hydrolysis activity"/>
    <property type="evidence" value="ECO:0007669"/>
    <property type="project" value="InterPro"/>
</dbReference>
<dbReference type="GO" id="GO:0003677">
    <property type="term" value="F:DNA binding"/>
    <property type="evidence" value="ECO:0007669"/>
    <property type="project" value="UniProtKB-UniRule"/>
</dbReference>
<dbReference type="GO" id="GO:0009381">
    <property type="term" value="F:excinuclease ABC activity"/>
    <property type="evidence" value="ECO:0007669"/>
    <property type="project" value="UniProtKB-UniRule"/>
</dbReference>
<dbReference type="GO" id="GO:0006289">
    <property type="term" value="P:nucleotide-excision repair"/>
    <property type="evidence" value="ECO:0007669"/>
    <property type="project" value="UniProtKB-UniRule"/>
</dbReference>
<dbReference type="GO" id="GO:0009432">
    <property type="term" value="P:SOS response"/>
    <property type="evidence" value="ECO:0007669"/>
    <property type="project" value="UniProtKB-UniRule"/>
</dbReference>
<dbReference type="CDD" id="cd17916">
    <property type="entry name" value="DEXHc_UvrB"/>
    <property type="match status" value="1"/>
</dbReference>
<dbReference type="CDD" id="cd18790">
    <property type="entry name" value="SF2_C_UvrB"/>
    <property type="match status" value="1"/>
</dbReference>
<dbReference type="Gene3D" id="3.40.50.300">
    <property type="entry name" value="P-loop containing nucleotide triphosphate hydrolases"/>
    <property type="match status" value="3"/>
</dbReference>
<dbReference type="HAMAP" id="MF_00204">
    <property type="entry name" value="UvrB"/>
    <property type="match status" value="1"/>
</dbReference>
<dbReference type="InterPro" id="IPR006935">
    <property type="entry name" value="Helicase/UvrB_N"/>
</dbReference>
<dbReference type="InterPro" id="IPR014001">
    <property type="entry name" value="Helicase_ATP-bd"/>
</dbReference>
<dbReference type="InterPro" id="IPR001650">
    <property type="entry name" value="Helicase_C-like"/>
</dbReference>
<dbReference type="InterPro" id="IPR027417">
    <property type="entry name" value="P-loop_NTPase"/>
</dbReference>
<dbReference type="InterPro" id="IPR001943">
    <property type="entry name" value="UVR_dom"/>
</dbReference>
<dbReference type="InterPro" id="IPR036876">
    <property type="entry name" value="UVR_dom_sf"/>
</dbReference>
<dbReference type="InterPro" id="IPR004807">
    <property type="entry name" value="UvrB"/>
</dbReference>
<dbReference type="InterPro" id="IPR041471">
    <property type="entry name" value="UvrB_inter"/>
</dbReference>
<dbReference type="InterPro" id="IPR024759">
    <property type="entry name" value="UvrB_YAD/RRR_dom"/>
</dbReference>
<dbReference type="NCBIfam" id="NF003673">
    <property type="entry name" value="PRK05298.1"/>
    <property type="match status" value="1"/>
</dbReference>
<dbReference type="NCBIfam" id="TIGR00631">
    <property type="entry name" value="uvrb"/>
    <property type="match status" value="1"/>
</dbReference>
<dbReference type="PANTHER" id="PTHR24029">
    <property type="entry name" value="UVRABC SYSTEM PROTEIN B"/>
    <property type="match status" value="1"/>
</dbReference>
<dbReference type="PANTHER" id="PTHR24029:SF0">
    <property type="entry name" value="UVRABC SYSTEM PROTEIN B"/>
    <property type="match status" value="1"/>
</dbReference>
<dbReference type="Pfam" id="PF00271">
    <property type="entry name" value="Helicase_C"/>
    <property type="match status" value="1"/>
</dbReference>
<dbReference type="Pfam" id="PF04851">
    <property type="entry name" value="ResIII"/>
    <property type="match status" value="1"/>
</dbReference>
<dbReference type="Pfam" id="PF02151">
    <property type="entry name" value="UVR"/>
    <property type="match status" value="1"/>
</dbReference>
<dbReference type="Pfam" id="PF12344">
    <property type="entry name" value="UvrB"/>
    <property type="match status" value="1"/>
</dbReference>
<dbReference type="Pfam" id="PF17757">
    <property type="entry name" value="UvrB_inter"/>
    <property type="match status" value="1"/>
</dbReference>
<dbReference type="SMART" id="SM00487">
    <property type="entry name" value="DEXDc"/>
    <property type="match status" value="1"/>
</dbReference>
<dbReference type="SMART" id="SM00490">
    <property type="entry name" value="HELICc"/>
    <property type="match status" value="1"/>
</dbReference>
<dbReference type="SUPFAM" id="SSF46600">
    <property type="entry name" value="C-terminal UvrC-binding domain of UvrB"/>
    <property type="match status" value="1"/>
</dbReference>
<dbReference type="SUPFAM" id="SSF52540">
    <property type="entry name" value="P-loop containing nucleoside triphosphate hydrolases"/>
    <property type="match status" value="2"/>
</dbReference>
<dbReference type="PROSITE" id="PS51192">
    <property type="entry name" value="HELICASE_ATP_BIND_1"/>
    <property type="match status" value="1"/>
</dbReference>
<dbReference type="PROSITE" id="PS51194">
    <property type="entry name" value="HELICASE_CTER"/>
    <property type="match status" value="1"/>
</dbReference>
<dbReference type="PROSITE" id="PS50151">
    <property type="entry name" value="UVR"/>
    <property type="match status" value="1"/>
</dbReference>
<comment type="function">
    <text evidence="1">The UvrABC repair system catalyzes the recognition and processing of DNA lesions. A damage recognition complex composed of 2 UvrA and 2 UvrB subunits scans DNA for abnormalities. Upon binding of the UvrA(2)B(2) complex to a putative damaged site, the DNA wraps around one UvrB monomer. DNA wrap is dependent on ATP binding by UvrB and probably causes local melting of the DNA helix, facilitating insertion of UvrB beta-hairpin between the DNA strands. Then UvrB probes one DNA strand for the presence of a lesion. If a lesion is found the UvrA subunits dissociate and the UvrB-DNA preincision complex is formed. This complex is subsequently bound by UvrC and the second UvrB is released. If no lesion is found, the DNA wraps around the other UvrB subunit that will check the other stand for damage.</text>
</comment>
<comment type="subunit">
    <text evidence="1">Forms a heterotetramer with UvrA during the search for lesions. Interacts with UvrC in an incision complex.</text>
</comment>
<comment type="subcellular location">
    <subcellularLocation>
        <location evidence="1">Cytoplasm</location>
    </subcellularLocation>
</comment>
<comment type="domain">
    <text evidence="1">The beta-hairpin motif is involved in DNA binding.</text>
</comment>
<comment type="similarity">
    <text evidence="1">Belongs to the UvrB family.</text>
</comment>
<feature type="chain" id="PRO_0000138382" description="UvrABC system protein B">
    <location>
        <begin position="1"/>
        <end position="673"/>
    </location>
</feature>
<feature type="domain" description="Helicase ATP-binding" evidence="1">
    <location>
        <begin position="30"/>
        <end position="417"/>
    </location>
</feature>
<feature type="domain" description="Helicase C-terminal" evidence="1">
    <location>
        <begin position="434"/>
        <end position="600"/>
    </location>
</feature>
<feature type="domain" description="UVR" evidence="1">
    <location>
        <begin position="627"/>
        <end position="662"/>
    </location>
</feature>
<feature type="short sequence motif" description="Beta-hairpin">
    <location>
        <begin position="96"/>
        <end position="119"/>
    </location>
</feature>
<feature type="binding site" evidence="1">
    <location>
        <begin position="43"/>
        <end position="50"/>
    </location>
    <ligand>
        <name>ATP</name>
        <dbReference type="ChEBI" id="CHEBI:30616"/>
    </ligand>
</feature>
<keyword id="KW-0067">ATP-binding</keyword>
<keyword id="KW-0963">Cytoplasm</keyword>
<keyword id="KW-0227">DNA damage</keyword>
<keyword id="KW-0228">DNA excision</keyword>
<keyword id="KW-0234">DNA repair</keyword>
<keyword id="KW-0267">Excision nuclease</keyword>
<keyword id="KW-0547">Nucleotide-binding</keyword>
<keyword id="KW-1185">Reference proteome</keyword>
<keyword id="KW-0742">SOS response</keyword>
<gene>
    <name evidence="1" type="primary">uvrB</name>
    <name type="ordered locus">BB_0836</name>
</gene>
<protein>
    <recommendedName>
        <fullName evidence="1">UvrABC system protein B</fullName>
        <shortName evidence="1">Protein UvrB</shortName>
    </recommendedName>
    <alternativeName>
        <fullName evidence="1">Excinuclease ABC subunit B</fullName>
    </alternativeName>
</protein>
<name>UVRB_BORBU</name>
<accession>O51776</accession>
<sequence length="673" mass="77565">MVVKLMIDFFLKSEYLPAGDQPKAIKEIENSILLGNKYQTLKGVTGSGKTFTIANIIKDLNRPALVVSHNKTLAAQLYREFKDFFPNNAVEYFVSYYDYYQPESYVPSKDLFIEKEATINTEIEIKRIRTVTSLAKRRDVIVVATVSSIYALGSPDFFKKSAREFFVGQKISIKEISDIFVELYYERTLMNLERDKFSIKGDIVEIWPSSEHGEFAYRICLDFDEIVEIYRVSSFSKKNLGATNSFTLFAKSYFVIPYENVLEAIPKISHDLSLQCQYFKDNGKLVEAERLKQRVEYDLEMLRETGFCSGIENYSKYLSGSTMERPYCLFDFFPKDXLLFVDESHVTLPQFRGMYNGDHSRKLNLVNFGFRLPAALENRPLKYDEFEALINQVVFVSATPGVEENEKSSVVVDQIIRPTGLVDPEIITRHSDGQMEDLYSEIQKRVALKERVLITTLTKKMSEDLTEYLVNLGVRAKYLHSELDTLERVEVISLLRKSEIDVIVGINLLREGLDIPEVSLVAILDADKVGFLRSTTSLIQTIGRAARNSNGLVIMYYDKISLAMREAIEETNRRRQIQIDYNKKNNITPKTIVKKIQNILEKELNNKNKNVGYDFEKIISGERLSKKKLIDKLKFDLEEAVNDERFEDAIVLRDKIKELSSKISIARNKKREV</sequence>
<evidence type="ECO:0000255" key="1">
    <source>
        <dbReference type="HAMAP-Rule" id="MF_00204"/>
    </source>
</evidence>
<proteinExistence type="inferred from homology"/>